<name>EX7S_LACPL</name>
<gene>
    <name evidence="1" type="primary">xseB</name>
    <name type="ordered locus">lp_1601</name>
</gene>
<sequence>MAEQPTFEQNLSQLETIVNQLEQGDVPLEQALDQFQKGVALSKQLQATLEGAEKTLTKMMNENGDEVPFEQADANE</sequence>
<organism>
    <name type="scientific">Lactiplantibacillus plantarum (strain ATCC BAA-793 / NCIMB 8826 / WCFS1)</name>
    <name type="common">Lactobacillus plantarum</name>
    <dbReference type="NCBI Taxonomy" id="220668"/>
    <lineage>
        <taxon>Bacteria</taxon>
        <taxon>Bacillati</taxon>
        <taxon>Bacillota</taxon>
        <taxon>Bacilli</taxon>
        <taxon>Lactobacillales</taxon>
        <taxon>Lactobacillaceae</taxon>
        <taxon>Lactiplantibacillus</taxon>
    </lineage>
</organism>
<dbReference type="EC" id="3.1.11.6" evidence="1"/>
<dbReference type="EMBL" id="AL935263">
    <property type="protein sequence ID" value="CCC78915.1"/>
    <property type="molecule type" value="Genomic_DNA"/>
</dbReference>
<dbReference type="RefSeq" id="WP_003640351.1">
    <property type="nucleotide sequence ID" value="NC_004567.2"/>
</dbReference>
<dbReference type="RefSeq" id="YP_004889429.1">
    <property type="nucleotide sequence ID" value="NC_004567.2"/>
</dbReference>
<dbReference type="SMR" id="Q88WM6"/>
<dbReference type="STRING" id="220668.lp_1601"/>
<dbReference type="EnsemblBacteria" id="CCC78915">
    <property type="protein sequence ID" value="CCC78915"/>
    <property type="gene ID" value="lp_1601"/>
</dbReference>
<dbReference type="KEGG" id="lpl:lp_1601"/>
<dbReference type="PATRIC" id="fig|220668.9.peg.1350"/>
<dbReference type="eggNOG" id="COG1722">
    <property type="taxonomic scope" value="Bacteria"/>
</dbReference>
<dbReference type="HOGENOM" id="CLU_145918_3_2_9"/>
<dbReference type="OrthoDB" id="9798666at2"/>
<dbReference type="PhylomeDB" id="Q88WM6"/>
<dbReference type="Proteomes" id="UP000000432">
    <property type="component" value="Chromosome"/>
</dbReference>
<dbReference type="GO" id="GO:0005829">
    <property type="term" value="C:cytosol"/>
    <property type="evidence" value="ECO:0007669"/>
    <property type="project" value="TreeGrafter"/>
</dbReference>
<dbReference type="GO" id="GO:0009318">
    <property type="term" value="C:exodeoxyribonuclease VII complex"/>
    <property type="evidence" value="ECO:0007669"/>
    <property type="project" value="InterPro"/>
</dbReference>
<dbReference type="GO" id="GO:0008855">
    <property type="term" value="F:exodeoxyribonuclease VII activity"/>
    <property type="evidence" value="ECO:0007669"/>
    <property type="project" value="UniProtKB-UniRule"/>
</dbReference>
<dbReference type="GO" id="GO:0006308">
    <property type="term" value="P:DNA catabolic process"/>
    <property type="evidence" value="ECO:0007669"/>
    <property type="project" value="UniProtKB-UniRule"/>
</dbReference>
<dbReference type="Gene3D" id="1.10.287.1040">
    <property type="entry name" value="Exonuclease VII, small subunit"/>
    <property type="match status" value="1"/>
</dbReference>
<dbReference type="HAMAP" id="MF_00337">
    <property type="entry name" value="Exonuc_7_S"/>
    <property type="match status" value="1"/>
</dbReference>
<dbReference type="InterPro" id="IPR003761">
    <property type="entry name" value="Exonuc_VII_S"/>
</dbReference>
<dbReference type="InterPro" id="IPR037004">
    <property type="entry name" value="Exonuc_VII_ssu_sf"/>
</dbReference>
<dbReference type="NCBIfam" id="NF002138">
    <property type="entry name" value="PRK00977.1-2"/>
    <property type="match status" value="1"/>
</dbReference>
<dbReference type="NCBIfam" id="TIGR01280">
    <property type="entry name" value="xseB"/>
    <property type="match status" value="1"/>
</dbReference>
<dbReference type="PANTHER" id="PTHR34137">
    <property type="entry name" value="EXODEOXYRIBONUCLEASE 7 SMALL SUBUNIT"/>
    <property type="match status" value="1"/>
</dbReference>
<dbReference type="PANTHER" id="PTHR34137:SF1">
    <property type="entry name" value="EXODEOXYRIBONUCLEASE 7 SMALL SUBUNIT"/>
    <property type="match status" value="1"/>
</dbReference>
<dbReference type="Pfam" id="PF02609">
    <property type="entry name" value="Exonuc_VII_S"/>
    <property type="match status" value="1"/>
</dbReference>
<dbReference type="PIRSF" id="PIRSF006488">
    <property type="entry name" value="Exonuc_VII_S"/>
    <property type="match status" value="1"/>
</dbReference>
<dbReference type="SUPFAM" id="SSF116842">
    <property type="entry name" value="XseB-like"/>
    <property type="match status" value="1"/>
</dbReference>
<accession>Q88WM6</accession>
<accession>F9UNX6</accession>
<protein>
    <recommendedName>
        <fullName evidence="1">Exodeoxyribonuclease 7 small subunit</fullName>
        <ecNumber evidence="1">3.1.11.6</ecNumber>
    </recommendedName>
    <alternativeName>
        <fullName evidence="1">Exodeoxyribonuclease VII small subunit</fullName>
        <shortName evidence="1">Exonuclease VII small subunit</shortName>
    </alternativeName>
</protein>
<evidence type="ECO:0000255" key="1">
    <source>
        <dbReference type="HAMAP-Rule" id="MF_00337"/>
    </source>
</evidence>
<keyword id="KW-0963">Cytoplasm</keyword>
<keyword id="KW-0269">Exonuclease</keyword>
<keyword id="KW-0378">Hydrolase</keyword>
<keyword id="KW-0540">Nuclease</keyword>
<keyword id="KW-1185">Reference proteome</keyword>
<reference key="1">
    <citation type="journal article" date="2003" name="Proc. Natl. Acad. Sci. U.S.A.">
        <title>Complete genome sequence of Lactobacillus plantarum WCFS1.</title>
        <authorList>
            <person name="Kleerebezem M."/>
            <person name="Boekhorst J."/>
            <person name="van Kranenburg R."/>
            <person name="Molenaar D."/>
            <person name="Kuipers O.P."/>
            <person name="Leer R."/>
            <person name="Tarchini R."/>
            <person name="Peters S.A."/>
            <person name="Sandbrink H.M."/>
            <person name="Fiers M.W.E.J."/>
            <person name="Stiekema W."/>
            <person name="Klein Lankhorst R.M."/>
            <person name="Bron P.A."/>
            <person name="Hoffer S.M."/>
            <person name="Nierop Groot M.N."/>
            <person name="Kerkhoven R."/>
            <person name="De Vries M."/>
            <person name="Ursing B."/>
            <person name="De Vos W.M."/>
            <person name="Siezen R.J."/>
        </authorList>
    </citation>
    <scope>NUCLEOTIDE SEQUENCE [LARGE SCALE GENOMIC DNA]</scope>
    <source>
        <strain>ATCC BAA-793 / NCIMB 8826 / WCFS1</strain>
    </source>
</reference>
<reference key="2">
    <citation type="journal article" date="2012" name="J. Bacteriol.">
        <title>Complete resequencing and reannotation of the Lactobacillus plantarum WCFS1 genome.</title>
        <authorList>
            <person name="Siezen R.J."/>
            <person name="Francke C."/>
            <person name="Renckens B."/>
            <person name="Boekhorst J."/>
            <person name="Wels M."/>
            <person name="Kleerebezem M."/>
            <person name="van Hijum S.A."/>
        </authorList>
    </citation>
    <scope>NUCLEOTIDE SEQUENCE [LARGE SCALE GENOMIC DNA]</scope>
    <scope>GENOME REANNOTATION</scope>
    <source>
        <strain>ATCC BAA-793 / NCIMB 8826 / WCFS1</strain>
    </source>
</reference>
<comment type="function">
    <text evidence="1">Bidirectionally degrades single-stranded DNA into large acid-insoluble oligonucleotides, which are then degraded further into small acid-soluble oligonucleotides.</text>
</comment>
<comment type="catalytic activity">
    <reaction evidence="1">
        <text>Exonucleolytic cleavage in either 5'- to 3'- or 3'- to 5'-direction to yield nucleoside 5'-phosphates.</text>
        <dbReference type="EC" id="3.1.11.6"/>
    </reaction>
</comment>
<comment type="subunit">
    <text evidence="1">Heterooligomer composed of large and small subunits.</text>
</comment>
<comment type="subcellular location">
    <subcellularLocation>
        <location evidence="1">Cytoplasm</location>
    </subcellularLocation>
</comment>
<comment type="similarity">
    <text evidence="1">Belongs to the XseB family.</text>
</comment>
<proteinExistence type="inferred from homology"/>
<feature type="chain" id="PRO_0000206960" description="Exodeoxyribonuclease 7 small subunit">
    <location>
        <begin position="1"/>
        <end position="76"/>
    </location>
</feature>